<protein>
    <recommendedName>
        <fullName evidence="1">Peptide chain release factor 1</fullName>
        <shortName evidence="1">RF-1</shortName>
    </recommendedName>
</protein>
<evidence type="ECO:0000255" key="1">
    <source>
        <dbReference type="HAMAP-Rule" id="MF_00093"/>
    </source>
</evidence>
<evidence type="ECO:0000256" key="2">
    <source>
        <dbReference type="SAM" id="MobiDB-lite"/>
    </source>
</evidence>
<sequence length="363" mass="40315">MKESVIRKLEGLLERNEEVLALLGDASVIADQERFRALSKEYSQLEEVVAGFKAYQQALADLESAKEMLEEDDAEMREMAQEEIKAAKAELERLEAELQILLLPKDPNDDTNAFIEIRAGAGGDEAAIFAGDLFRMYSRYAEANRWQLEIMSSNEGEHGGFKEIIVKVSGEGAYGKLKFESGGHRVQRVPETESQGRVHTSAVTVVVMHEVPEAEAISINPADLKVDTFRSSGAGGQHVNKTDSAIRITHIPTGIVVECQDQRSQHKNRAQAMSVLAARIQAVEDEKRRSAEESTRRSLVASGDRSERVRTYNFPQGRVSEHRINLTLYRLNEVMEGDLDAILGPLMQEHQADLLAALADEQG</sequence>
<keyword id="KW-0963">Cytoplasm</keyword>
<keyword id="KW-0488">Methylation</keyword>
<keyword id="KW-0648">Protein biosynthesis</keyword>
<organism>
    <name type="scientific">Shewanella sp. (strain MR-7)</name>
    <dbReference type="NCBI Taxonomy" id="60481"/>
    <lineage>
        <taxon>Bacteria</taxon>
        <taxon>Pseudomonadati</taxon>
        <taxon>Pseudomonadota</taxon>
        <taxon>Gammaproteobacteria</taxon>
        <taxon>Alteromonadales</taxon>
        <taxon>Shewanellaceae</taxon>
        <taxon>Shewanella</taxon>
    </lineage>
</organism>
<dbReference type="EMBL" id="CP000444">
    <property type="protein sequence ID" value="ABI41797.1"/>
    <property type="molecule type" value="Genomic_DNA"/>
</dbReference>
<dbReference type="SMR" id="Q0HYK8"/>
<dbReference type="KEGG" id="shm:Shewmr7_0797"/>
<dbReference type="HOGENOM" id="CLU_036856_0_1_6"/>
<dbReference type="GO" id="GO:0005737">
    <property type="term" value="C:cytoplasm"/>
    <property type="evidence" value="ECO:0007669"/>
    <property type="project" value="UniProtKB-SubCell"/>
</dbReference>
<dbReference type="GO" id="GO:0016149">
    <property type="term" value="F:translation release factor activity, codon specific"/>
    <property type="evidence" value="ECO:0007669"/>
    <property type="project" value="UniProtKB-UniRule"/>
</dbReference>
<dbReference type="FunFam" id="3.30.160.20:FF:000004">
    <property type="entry name" value="Peptide chain release factor 1"/>
    <property type="match status" value="1"/>
</dbReference>
<dbReference type="FunFam" id="3.30.70.1660:FF:000002">
    <property type="entry name" value="Peptide chain release factor 1"/>
    <property type="match status" value="1"/>
</dbReference>
<dbReference type="FunFam" id="3.30.70.1660:FF:000004">
    <property type="entry name" value="Peptide chain release factor 1"/>
    <property type="match status" value="1"/>
</dbReference>
<dbReference type="Gene3D" id="3.30.160.20">
    <property type="match status" value="1"/>
</dbReference>
<dbReference type="Gene3D" id="3.30.70.1660">
    <property type="match status" value="2"/>
</dbReference>
<dbReference type="Gene3D" id="6.10.140.1950">
    <property type="match status" value="1"/>
</dbReference>
<dbReference type="HAMAP" id="MF_00093">
    <property type="entry name" value="Rel_fac_1"/>
    <property type="match status" value="1"/>
</dbReference>
<dbReference type="InterPro" id="IPR005139">
    <property type="entry name" value="PCRF"/>
</dbReference>
<dbReference type="InterPro" id="IPR000352">
    <property type="entry name" value="Pep_chain_release_fac_I"/>
</dbReference>
<dbReference type="InterPro" id="IPR045853">
    <property type="entry name" value="Pep_chain_release_fac_I_sf"/>
</dbReference>
<dbReference type="InterPro" id="IPR050057">
    <property type="entry name" value="Prokaryotic/Mito_RF"/>
</dbReference>
<dbReference type="InterPro" id="IPR004373">
    <property type="entry name" value="RF-1"/>
</dbReference>
<dbReference type="NCBIfam" id="TIGR00019">
    <property type="entry name" value="prfA"/>
    <property type="match status" value="1"/>
</dbReference>
<dbReference type="NCBIfam" id="NF001859">
    <property type="entry name" value="PRK00591.1"/>
    <property type="match status" value="1"/>
</dbReference>
<dbReference type="PANTHER" id="PTHR43804">
    <property type="entry name" value="LD18447P"/>
    <property type="match status" value="1"/>
</dbReference>
<dbReference type="PANTHER" id="PTHR43804:SF7">
    <property type="entry name" value="LD18447P"/>
    <property type="match status" value="1"/>
</dbReference>
<dbReference type="Pfam" id="PF03462">
    <property type="entry name" value="PCRF"/>
    <property type="match status" value="1"/>
</dbReference>
<dbReference type="Pfam" id="PF00472">
    <property type="entry name" value="RF-1"/>
    <property type="match status" value="1"/>
</dbReference>
<dbReference type="SMART" id="SM00937">
    <property type="entry name" value="PCRF"/>
    <property type="match status" value="1"/>
</dbReference>
<dbReference type="SUPFAM" id="SSF75620">
    <property type="entry name" value="Release factor"/>
    <property type="match status" value="1"/>
</dbReference>
<dbReference type="PROSITE" id="PS00745">
    <property type="entry name" value="RF_PROK_I"/>
    <property type="match status" value="1"/>
</dbReference>
<accession>Q0HYK8</accession>
<name>RF1_SHESR</name>
<feature type="chain" id="PRO_0000263350" description="Peptide chain release factor 1">
    <location>
        <begin position="1"/>
        <end position="363"/>
    </location>
</feature>
<feature type="region of interest" description="Disordered" evidence="2">
    <location>
        <begin position="284"/>
        <end position="305"/>
    </location>
</feature>
<feature type="compositionally biased region" description="Basic and acidic residues" evidence="2">
    <location>
        <begin position="284"/>
        <end position="296"/>
    </location>
</feature>
<feature type="modified residue" description="N5-methylglutamine" evidence="1">
    <location>
        <position position="237"/>
    </location>
</feature>
<reference key="1">
    <citation type="submission" date="2006-08" db="EMBL/GenBank/DDBJ databases">
        <title>Complete sequence of chromosome 1 of Shewanella sp. MR-7.</title>
        <authorList>
            <person name="Copeland A."/>
            <person name="Lucas S."/>
            <person name="Lapidus A."/>
            <person name="Barry K."/>
            <person name="Detter J.C."/>
            <person name="Glavina del Rio T."/>
            <person name="Hammon N."/>
            <person name="Israni S."/>
            <person name="Dalin E."/>
            <person name="Tice H."/>
            <person name="Pitluck S."/>
            <person name="Kiss H."/>
            <person name="Brettin T."/>
            <person name="Bruce D."/>
            <person name="Han C."/>
            <person name="Tapia R."/>
            <person name="Gilna P."/>
            <person name="Schmutz J."/>
            <person name="Larimer F."/>
            <person name="Land M."/>
            <person name="Hauser L."/>
            <person name="Kyrpides N."/>
            <person name="Mikhailova N."/>
            <person name="Nealson K."/>
            <person name="Konstantinidis K."/>
            <person name="Klappenbach J."/>
            <person name="Tiedje J."/>
            <person name="Richardson P."/>
        </authorList>
    </citation>
    <scope>NUCLEOTIDE SEQUENCE [LARGE SCALE GENOMIC DNA]</scope>
    <source>
        <strain>MR-7</strain>
    </source>
</reference>
<proteinExistence type="inferred from homology"/>
<gene>
    <name evidence="1" type="primary">prfA</name>
    <name type="ordered locus">Shewmr7_0797</name>
</gene>
<comment type="function">
    <text evidence="1">Peptide chain release factor 1 directs the termination of translation in response to the peptide chain termination codons UAG and UAA.</text>
</comment>
<comment type="subcellular location">
    <subcellularLocation>
        <location evidence="1">Cytoplasm</location>
    </subcellularLocation>
</comment>
<comment type="PTM">
    <text evidence="1">Methylated by PrmC. Methylation increases the termination efficiency of RF1.</text>
</comment>
<comment type="similarity">
    <text evidence="1">Belongs to the prokaryotic/mitochondrial release factor family.</text>
</comment>